<name>UME1_YEAST</name>
<keyword id="KW-0002">3D-structure</keyword>
<keyword id="KW-0156">Chromatin regulator</keyword>
<keyword id="KW-0963">Cytoplasm</keyword>
<keyword id="KW-0469">Meiosis</keyword>
<keyword id="KW-0539">Nucleus</keyword>
<keyword id="KW-1185">Reference proteome</keyword>
<keyword id="KW-0677">Repeat</keyword>
<keyword id="KW-0678">Repressor</keyword>
<keyword id="KW-0804">Transcription</keyword>
<keyword id="KW-0805">Transcription regulation</keyword>
<keyword id="KW-0853">WD repeat</keyword>
<evidence type="ECO:0000269" key="1">
    <source>
    </source>
</evidence>
<evidence type="ECO:0000269" key="2">
    <source>
    </source>
</evidence>
<evidence type="ECO:0000269" key="3">
    <source>
    </source>
</evidence>
<evidence type="ECO:0000269" key="4">
    <source>
    </source>
</evidence>
<evidence type="ECO:0000269" key="5">
    <source>
    </source>
</evidence>
<evidence type="ECO:0007829" key="6">
    <source>
        <dbReference type="PDB" id="8HPO"/>
    </source>
</evidence>
<reference key="1">
    <citation type="submission" date="1997-01" db="EMBL/GenBank/DDBJ databases">
        <authorList>
            <person name="Mallory M.J."/>
            <person name="Strich R."/>
        </authorList>
    </citation>
    <scope>NUCLEOTIDE SEQUENCE [GENOMIC DNA]</scope>
    <source>
        <strain>ATCC 204626 / S288c / A364A</strain>
    </source>
</reference>
<reference key="2">
    <citation type="journal article" date="1997" name="Nature">
        <title>The nucleotide sequence of Saccharomyces cerevisiae chromosome XVI.</title>
        <authorList>
            <person name="Bussey H."/>
            <person name="Storms R.K."/>
            <person name="Ahmed A."/>
            <person name="Albermann K."/>
            <person name="Allen E."/>
            <person name="Ansorge W."/>
            <person name="Araujo R."/>
            <person name="Aparicio A."/>
            <person name="Barrell B.G."/>
            <person name="Badcock K."/>
            <person name="Benes V."/>
            <person name="Botstein D."/>
            <person name="Bowman S."/>
            <person name="Brueckner M."/>
            <person name="Carpenter J."/>
            <person name="Cherry J.M."/>
            <person name="Chung E."/>
            <person name="Churcher C.M."/>
            <person name="Coster F."/>
            <person name="Davis K."/>
            <person name="Davis R.W."/>
            <person name="Dietrich F.S."/>
            <person name="Delius H."/>
            <person name="DiPaolo T."/>
            <person name="Dubois E."/>
            <person name="Duesterhoeft A."/>
            <person name="Duncan M."/>
            <person name="Floeth M."/>
            <person name="Fortin N."/>
            <person name="Friesen J.D."/>
            <person name="Fritz C."/>
            <person name="Goffeau A."/>
            <person name="Hall J."/>
            <person name="Hebling U."/>
            <person name="Heumann K."/>
            <person name="Hilbert H."/>
            <person name="Hillier L.W."/>
            <person name="Hunicke-Smith S."/>
            <person name="Hyman R.W."/>
            <person name="Johnston M."/>
            <person name="Kalman S."/>
            <person name="Kleine K."/>
            <person name="Komp C."/>
            <person name="Kurdi O."/>
            <person name="Lashkari D."/>
            <person name="Lew H."/>
            <person name="Lin A."/>
            <person name="Lin D."/>
            <person name="Louis E.J."/>
            <person name="Marathe R."/>
            <person name="Messenguy F."/>
            <person name="Mewes H.-W."/>
            <person name="Mirtipati S."/>
            <person name="Moestl D."/>
            <person name="Mueller-Auer S."/>
            <person name="Namath A."/>
            <person name="Nentwich U."/>
            <person name="Oefner P."/>
            <person name="Pearson D."/>
            <person name="Petel F.X."/>
            <person name="Pohl T.M."/>
            <person name="Purnelle B."/>
            <person name="Rajandream M.A."/>
            <person name="Rechmann S."/>
            <person name="Rieger M."/>
            <person name="Riles L."/>
            <person name="Roberts D."/>
            <person name="Schaefer M."/>
            <person name="Scharfe M."/>
            <person name="Scherens B."/>
            <person name="Schramm S."/>
            <person name="Schroeder M."/>
            <person name="Sdicu A.-M."/>
            <person name="Tettelin H."/>
            <person name="Urrestarazu L.A."/>
            <person name="Ushinsky S."/>
            <person name="Vierendeels F."/>
            <person name="Vissers S."/>
            <person name="Voss H."/>
            <person name="Walsh S.V."/>
            <person name="Wambutt R."/>
            <person name="Wang Y."/>
            <person name="Wedler E."/>
            <person name="Wedler H."/>
            <person name="Winnett E."/>
            <person name="Zhong W.-W."/>
            <person name="Zollner A."/>
            <person name="Vo D.H."/>
            <person name="Hani J."/>
        </authorList>
    </citation>
    <scope>NUCLEOTIDE SEQUENCE [LARGE SCALE GENOMIC DNA]</scope>
    <source>
        <strain>ATCC 204508 / S288c</strain>
    </source>
</reference>
<reference key="3">
    <citation type="journal article" date="2014" name="G3 (Bethesda)">
        <title>The reference genome sequence of Saccharomyces cerevisiae: Then and now.</title>
        <authorList>
            <person name="Engel S.R."/>
            <person name="Dietrich F.S."/>
            <person name="Fisk D.G."/>
            <person name="Binkley G."/>
            <person name="Balakrishnan R."/>
            <person name="Costanzo M.C."/>
            <person name="Dwight S.S."/>
            <person name="Hitz B.C."/>
            <person name="Karra K."/>
            <person name="Nash R.S."/>
            <person name="Weng S."/>
            <person name="Wong E.D."/>
            <person name="Lloyd P."/>
            <person name="Skrzypek M.S."/>
            <person name="Miyasato S.R."/>
            <person name="Simison M."/>
            <person name="Cherry J.M."/>
        </authorList>
    </citation>
    <scope>GENOME REANNOTATION</scope>
    <source>
        <strain>ATCC 204508 / S288c</strain>
    </source>
</reference>
<reference key="4">
    <citation type="journal article" date="1997" name="Mol. Cell. Biol.">
        <title>Characterization of the Wtm proteins, a novel family of Saccharomyces cerevisiae transcriptional modulators with roles in meiotic regulation and silencing.</title>
        <authorList>
            <person name="Pemberton L.F."/>
            <person name="Blobel G."/>
        </authorList>
    </citation>
    <scope>FUNCTION</scope>
    <scope>SUBCELLULAR LOCATION</scope>
</reference>
<reference key="5">
    <citation type="journal article" date="2003" name="J. Biol. Chem.">
        <title>Ume1p represses meiotic gene transcription in Saccharomyces cerevisiae through interaction with the histone deacetylase Rpd3p.</title>
        <authorList>
            <person name="Mallory M.J."/>
            <person name="Strich R."/>
        </authorList>
    </citation>
    <scope>FUNCTION</scope>
    <scope>INDUCTION</scope>
    <scope>DOMAINS</scope>
    <scope>INTERACTION WITH RPD3</scope>
</reference>
<reference key="6">
    <citation type="journal article" date="2003" name="Nature">
        <title>Global analysis of protein localization in budding yeast.</title>
        <authorList>
            <person name="Huh W.-K."/>
            <person name="Falvo J.V."/>
            <person name="Gerke L.C."/>
            <person name="Carroll A.S."/>
            <person name="Howson R.W."/>
            <person name="Weissman J.S."/>
            <person name="O'Shea E.K."/>
        </authorList>
    </citation>
    <scope>SUBCELLULAR LOCATION [LARGE SCALE ANALYSIS]</scope>
</reference>
<reference key="7">
    <citation type="journal article" date="2003" name="Nature">
        <title>Global analysis of protein expression in yeast.</title>
        <authorList>
            <person name="Ghaemmaghami S."/>
            <person name="Huh W.-K."/>
            <person name="Bower K."/>
            <person name="Howson R.W."/>
            <person name="Belle A."/>
            <person name="Dephoure N."/>
            <person name="O'Shea E.K."/>
            <person name="Weissman J.S."/>
        </authorList>
    </citation>
    <scope>LEVEL OF PROTEIN EXPRESSION [LARGE SCALE ANALYSIS]</scope>
</reference>
<reference key="8">
    <citation type="journal article" date="2005" name="Biochim. Biophys. Acta">
        <title>Stable incorporation of sequence specific repressors Ash1 and Ume6 into the Rpd3L complex.</title>
        <authorList>
            <person name="Carrozza M.J."/>
            <person name="Florens L."/>
            <person name="Swanson S.K."/>
            <person name="Shia W.-J."/>
            <person name="Anderson S."/>
            <person name="Yates J."/>
            <person name="Washburn M.P."/>
            <person name="Workman J.L."/>
        </authorList>
    </citation>
    <scope>IDENTIFICATION IN THE RPD3C(L) COMPLEX</scope>
    <scope>IDENTIFICATION BY MASS SPECTROMETRY</scope>
</reference>
<reference key="9">
    <citation type="journal article" date="2005" name="Cell">
        <title>Cotranscriptional set2 methylation of histone H3 lysine 36 recruits a repressive Rpd3 complex.</title>
        <authorList>
            <person name="Keogh M.-C."/>
            <person name="Kurdistani S.K."/>
            <person name="Morris S.A."/>
            <person name="Ahn S.H."/>
            <person name="Podolny V."/>
            <person name="Collins S.R."/>
            <person name="Schuldiner M."/>
            <person name="Chin K."/>
            <person name="Punna T."/>
            <person name="Thompson N.J."/>
            <person name="Boone C."/>
            <person name="Emili A."/>
            <person name="Weissman J.S."/>
            <person name="Hughes T.R."/>
            <person name="Strahl B.D."/>
            <person name="Grunstein M."/>
            <person name="Greenblatt J.F."/>
            <person name="Buratowski S."/>
            <person name="Krogan N.J."/>
        </authorList>
    </citation>
    <scope>IDENTIFICATION IN THE RPD3C(L) AND RPD3C(S) COMPLEXES</scope>
    <scope>IDENTIFICATION BY MASS SPECTROMETRY</scope>
    <scope>FUNCTION OF THE RPD3C(S) COMPLEX</scope>
</reference>
<protein>
    <recommendedName>
        <fullName>Transcriptional regulatory protein UME1</fullName>
    </recommendedName>
    <alternativeName>
        <fullName>WD repeat-containing transcriptional modulator 3</fullName>
    </alternativeName>
</protein>
<gene>
    <name type="primary">UME1</name>
    <name type="synonym">WTM3</name>
    <name type="ordered locus">YPL139C</name>
    <name type="ORF">LPI7C</name>
</gene>
<dbReference type="EMBL" id="U10280">
    <property type="protein sequence ID" value="AAB40937.1"/>
    <property type="molecule type" value="Genomic_DNA"/>
</dbReference>
<dbReference type="EMBL" id="U43703">
    <property type="protein sequence ID" value="AAB68221.1"/>
    <property type="molecule type" value="Genomic_DNA"/>
</dbReference>
<dbReference type="EMBL" id="BK006949">
    <property type="protein sequence ID" value="DAA11295.1"/>
    <property type="molecule type" value="Genomic_DNA"/>
</dbReference>
<dbReference type="PIR" id="S69046">
    <property type="entry name" value="S69046"/>
</dbReference>
<dbReference type="RefSeq" id="NP_015186.1">
    <property type="nucleotide sequence ID" value="NM_001183953.1"/>
</dbReference>
<dbReference type="PDB" id="8HPO">
    <property type="method" value="EM"/>
    <property type="resolution" value="2.60 A"/>
    <property type="chains" value="K=1-460"/>
</dbReference>
<dbReference type="PDBsum" id="8HPO"/>
<dbReference type="EMDB" id="EMD-34935"/>
<dbReference type="SMR" id="Q03010"/>
<dbReference type="BioGRID" id="36043">
    <property type="interactions" value="309"/>
</dbReference>
<dbReference type="ComplexPortal" id="CPX-1851">
    <property type="entry name" value="RPD3S histone deacetylase complex"/>
</dbReference>
<dbReference type="ComplexPortal" id="CPX-1852">
    <property type="entry name" value="RPD3L histone deacetylase complex"/>
</dbReference>
<dbReference type="DIP" id="DIP-5290N"/>
<dbReference type="FunCoup" id="Q03010">
    <property type="interactions" value="645"/>
</dbReference>
<dbReference type="IntAct" id="Q03010">
    <property type="interactions" value="31"/>
</dbReference>
<dbReference type="MINT" id="Q03010"/>
<dbReference type="STRING" id="4932.YPL139C"/>
<dbReference type="iPTMnet" id="Q03010"/>
<dbReference type="PaxDb" id="4932-YPL139C"/>
<dbReference type="PeptideAtlas" id="Q03010"/>
<dbReference type="EnsemblFungi" id="YPL139C_mRNA">
    <property type="protein sequence ID" value="YPL139C"/>
    <property type="gene ID" value="YPL139C"/>
</dbReference>
<dbReference type="GeneID" id="855964"/>
<dbReference type="KEGG" id="sce:YPL139C"/>
<dbReference type="AGR" id="SGD:S000006060"/>
<dbReference type="SGD" id="S000006060">
    <property type="gene designation" value="UME1"/>
</dbReference>
<dbReference type="VEuPathDB" id="FungiDB:YPL139C"/>
<dbReference type="eggNOG" id="ENOG502QSEV">
    <property type="taxonomic scope" value="Eukaryota"/>
</dbReference>
<dbReference type="GeneTree" id="ENSGT00940000176348"/>
<dbReference type="HOGENOM" id="CLU_036523_0_0_1"/>
<dbReference type="InParanoid" id="Q03010"/>
<dbReference type="OMA" id="WDIRTIA"/>
<dbReference type="OrthoDB" id="427795at2759"/>
<dbReference type="BioCyc" id="YEAST:G3O-34037-MONOMER"/>
<dbReference type="Reactome" id="R-SCE-3214815">
    <property type="pathway name" value="HDACs deacetylate histones"/>
</dbReference>
<dbReference type="BioGRID-ORCS" id="855964">
    <property type="hits" value="0 hits in 10 CRISPR screens"/>
</dbReference>
<dbReference type="PRO" id="PR:Q03010"/>
<dbReference type="Proteomes" id="UP000002311">
    <property type="component" value="Chromosome XVI"/>
</dbReference>
<dbReference type="RNAct" id="Q03010">
    <property type="molecule type" value="protein"/>
</dbReference>
<dbReference type="GO" id="GO:0005737">
    <property type="term" value="C:cytoplasm"/>
    <property type="evidence" value="ECO:0000314"/>
    <property type="project" value="SGD"/>
</dbReference>
<dbReference type="GO" id="GO:0005634">
    <property type="term" value="C:nucleus"/>
    <property type="evidence" value="ECO:0000314"/>
    <property type="project" value="SGD"/>
</dbReference>
<dbReference type="GO" id="GO:0033698">
    <property type="term" value="C:Rpd3L complex"/>
    <property type="evidence" value="ECO:0000314"/>
    <property type="project" value="SGD"/>
</dbReference>
<dbReference type="GO" id="GO:0070210">
    <property type="term" value="C:Rpd3L-Expanded complex"/>
    <property type="evidence" value="ECO:0007005"/>
    <property type="project" value="SGD"/>
</dbReference>
<dbReference type="GO" id="GO:0032221">
    <property type="term" value="C:Rpd3S complex"/>
    <property type="evidence" value="ECO:0000314"/>
    <property type="project" value="SGD"/>
</dbReference>
<dbReference type="GO" id="GO:0042393">
    <property type="term" value="F:histone binding"/>
    <property type="evidence" value="ECO:0000318"/>
    <property type="project" value="GO_Central"/>
</dbReference>
<dbReference type="GO" id="GO:0003714">
    <property type="term" value="F:transcription corepressor activity"/>
    <property type="evidence" value="ECO:0000314"/>
    <property type="project" value="SGD"/>
</dbReference>
<dbReference type="GO" id="GO:0034605">
    <property type="term" value="P:cellular response to heat"/>
    <property type="evidence" value="ECO:0000315"/>
    <property type="project" value="SGD"/>
</dbReference>
<dbReference type="GO" id="GO:0006338">
    <property type="term" value="P:chromatin remodeling"/>
    <property type="evidence" value="ECO:0000318"/>
    <property type="project" value="GO_Central"/>
</dbReference>
<dbReference type="GO" id="GO:0051321">
    <property type="term" value="P:meiotic cell cycle"/>
    <property type="evidence" value="ECO:0007669"/>
    <property type="project" value="UniProtKB-KW"/>
</dbReference>
<dbReference type="GO" id="GO:0016479">
    <property type="term" value="P:negative regulation of transcription by RNA polymerase I"/>
    <property type="evidence" value="ECO:0000315"/>
    <property type="project" value="SGD"/>
</dbReference>
<dbReference type="GO" id="GO:0000122">
    <property type="term" value="P:negative regulation of transcription by RNA polymerase II"/>
    <property type="evidence" value="ECO:0000303"/>
    <property type="project" value="ComplexPortal"/>
</dbReference>
<dbReference type="GO" id="GO:0006334">
    <property type="term" value="P:nucleosome assembly"/>
    <property type="evidence" value="ECO:0000303"/>
    <property type="project" value="ComplexPortal"/>
</dbReference>
<dbReference type="GO" id="GO:0045944">
    <property type="term" value="P:positive regulation of transcription by RNA polymerase II"/>
    <property type="evidence" value="ECO:0000315"/>
    <property type="project" value="SGD"/>
</dbReference>
<dbReference type="GO" id="GO:0006355">
    <property type="term" value="P:regulation of DNA-templated transcription"/>
    <property type="evidence" value="ECO:0000318"/>
    <property type="project" value="GO_Central"/>
</dbReference>
<dbReference type="GO" id="GO:0040020">
    <property type="term" value="P:regulation of meiotic nuclear division"/>
    <property type="evidence" value="ECO:0000315"/>
    <property type="project" value="SGD"/>
</dbReference>
<dbReference type="GO" id="GO:0006357">
    <property type="term" value="P:regulation of transcription by RNA polymerase II"/>
    <property type="evidence" value="ECO:0000303"/>
    <property type="project" value="ComplexPortal"/>
</dbReference>
<dbReference type="FunFam" id="2.130.10.10:FF:000523">
    <property type="entry name" value="Transcriptional modulator"/>
    <property type="match status" value="1"/>
</dbReference>
<dbReference type="Gene3D" id="2.130.10.10">
    <property type="entry name" value="YVTN repeat-like/Quinoprotein amine dehydrogenase"/>
    <property type="match status" value="1"/>
</dbReference>
<dbReference type="InterPro" id="IPR015943">
    <property type="entry name" value="WD40/YVTN_repeat-like_dom_sf"/>
</dbReference>
<dbReference type="InterPro" id="IPR036322">
    <property type="entry name" value="WD40_repeat_dom_sf"/>
</dbReference>
<dbReference type="InterPro" id="IPR001680">
    <property type="entry name" value="WD40_rpt"/>
</dbReference>
<dbReference type="InterPro" id="IPR050459">
    <property type="entry name" value="WD_repeat_RBAP46/RBAP48/MSI1"/>
</dbReference>
<dbReference type="PANTHER" id="PTHR22850">
    <property type="entry name" value="WD40 REPEAT FAMILY"/>
    <property type="match status" value="1"/>
</dbReference>
<dbReference type="SMART" id="SM00320">
    <property type="entry name" value="WD40"/>
    <property type="match status" value="4"/>
</dbReference>
<dbReference type="SUPFAM" id="SSF50978">
    <property type="entry name" value="WD40 repeat-like"/>
    <property type="match status" value="1"/>
</dbReference>
<feature type="chain" id="PRO_0000051315" description="Transcriptional regulatory protein UME1">
    <location>
        <begin position="1"/>
        <end position="460"/>
    </location>
</feature>
<feature type="repeat" description="WD 1">
    <location>
        <begin position="233"/>
        <end position="271"/>
    </location>
</feature>
<feature type="repeat" description="WD 2">
    <location>
        <begin position="276"/>
        <end position="316"/>
    </location>
</feature>
<feature type="repeat" description="WD 3">
    <location>
        <begin position="339"/>
        <end position="379"/>
    </location>
</feature>
<feature type="repeat" description="WD 4">
    <location>
        <begin position="411"/>
        <end position="451"/>
    </location>
</feature>
<feature type="short sequence motif" description="NEE-box">
    <location>
        <begin position="14"/>
        <end position="22"/>
    </location>
</feature>
<feature type="helix" evidence="6">
    <location>
        <begin position="3"/>
        <end position="22"/>
    </location>
</feature>
<feature type="helix" evidence="6">
    <location>
        <begin position="24"/>
        <end position="27"/>
    </location>
</feature>
<feature type="strand" evidence="6">
    <location>
        <begin position="28"/>
        <end position="34"/>
    </location>
</feature>
<feature type="strand" evidence="6">
    <location>
        <begin position="50"/>
        <end position="54"/>
    </location>
</feature>
<feature type="strand" evidence="6">
    <location>
        <begin position="59"/>
        <end position="61"/>
    </location>
</feature>
<feature type="turn" evidence="6">
    <location>
        <begin position="62"/>
        <end position="65"/>
    </location>
</feature>
<feature type="strand" evidence="6">
    <location>
        <begin position="66"/>
        <end position="75"/>
    </location>
</feature>
<feature type="strand" evidence="6">
    <location>
        <begin position="78"/>
        <end position="87"/>
    </location>
</feature>
<feature type="helix" evidence="6">
    <location>
        <begin position="88"/>
        <end position="90"/>
    </location>
</feature>
<feature type="helix" evidence="6">
    <location>
        <begin position="108"/>
        <end position="116"/>
    </location>
</feature>
<feature type="strand" evidence="6">
    <location>
        <begin position="122"/>
        <end position="124"/>
    </location>
</feature>
<feature type="strand" evidence="6">
    <location>
        <begin position="130"/>
        <end position="134"/>
    </location>
</feature>
<feature type="turn" evidence="6">
    <location>
        <begin position="139"/>
        <end position="142"/>
    </location>
</feature>
<feature type="strand" evidence="6">
    <location>
        <begin position="143"/>
        <end position="149"/>
    </location>
</feature>
<feature type="strand" evidence="6">
    <location>
        <begin position="154"/>
        <end position="158"/>
    </location>
</feature>
<feature type="strand" evidence="6">
    <location>
        <begin position="165"/>
        <end position="168"/>
    </location>
</feature>
<feature type="strand" evidence="6">
    <location>
        <begin position="190"/>
        <end position="192"/>
    </location>
</feature>
<feature type="strand" evidence="6">
    <location>
        <begin position="198"/>
        <end position="203"/>
    </location>
</feature>
<feature type="strand" evidence="6">
    <location>
        <begin position="212"/>
        <end position="218"/>
    </location>
</feature>
<feature type="strand" evidence="6">
    <location>
        <begin position="220"/>
        <end position="222"/>
    </location>
</feature>
<feature type="strand" evidence="6">
    <location>
        <begin position="225"/>
        <end position="232"/>
    </location>
</feature>
<feature type="strand" evidence="6">
    <location>
        <begin position="238"/>
        <end position="253"/>
    </location>
</feature>
<feature type="strand" evidence="6">
    <location>
        <begin position="257"/>
        <end position="260"/>
    </location>
</feature>
<feature type="strand" evidence="6">
    <location>
        <begin position="262"/>
        <end position="265"/>
    </location>
</feature>
<feature type="strand" evidence="6">
    <location>
        <begin position="270"/>
        <end position="274"/>
    </location>
</feature>
<feature type="strand" evidence="6">
    <location>
        <begin position="281"/>
        <end position="286"/>
    </location>
</feature>
<feature type="strand" evidence="6">
    <location>
        <begin position="291"/>
        <end position="298"/>
    </location>
</feature>
<feature type="strand" evidence="6">
    <location>
        <begin position="301"/>
        <end position="307"/>
    </location>
</feature>
<feature type="helix" evidence="6">
    <location>
        <begin position="308"/>
        <end position="313"/>
    </location>
</feature>
<feature type="strand" evidence="6">
    <location>
        <begin position="333"/>
        <end position="337"/>
    </location>
</feature>
<feature type="helix" evidence="6">
    <location>
        <begin position="339"/>
        <end position="341"/>
    </location>
</feature>
<feature type="strand" evidence="6">
    <location>
        <begin position="346"/>
        <end position="349"/>
    </location>
</feature>
<feature type="strand" evidence="6">
    <location>
        <begin position="354"/>
        <end position="360"/>
    </location>
</feature>
<feature type="strand" evidence="6">
    <location>
        <begin position="366"/>
        <end position="370"/>
    </location>
</feature>
<feature type="helix" evidence="6">
    <location>
        <begin position="374"/>
        <end position="380"/>
    </location>
</feature>
<feature type="helix" evidence="6">
    <location>
        <begin position="391"/>
        <end position="397"/>
    </location>
</feature>
<feature type="strand" evidence="6">
    <location>
        <begin position="398"/>
        <end position="402"/>
    </location>
</feature>
<feature type="helix" evidence="6">
    <location>
        <begin position="404"/>
        <end position="406"/>
    </location>
</feature>
<feature type="strand" evidence="6">
    <location>
        <begin position="416"/>
        <end position="421"/>
    </location>
</feature>
<feature type="strand" evidence="6">
    <location>
        <begin position="423"/>
        <end position="425"/>
    </location>
</feature>
<feature type="strand" evidence="6">
    <location>
        <begin position="429"/>
        <end position="432"/>
    </location>
</feature>
<feature type="strand" evidence="6">
    <location>
        <begin position="438"/>
        <end position="443"/>
    </location>
</feature>
<organism>
    <name type="scientific">Saccharomyces cerevisiae (strain ATCC 204508 / S288c)</name>
    <name type="common">Baker's yeast</name>
    <dbReference type="NCBI Taxonomy" id="559292"/>
    <lineage>
        <taxon>Eukaryota</taxon>
        <taxon>Fungi</taxon>
        <taxon>Dikarya</taxon>
        <taxon>Ascomycota</taxon>
        <taxon>Saccharomycotina</taxon>
        <taxon>Saccharomycetes</taxon>
        <taxon>Saccharomycetales</taxon>
        <taxon>Saccharomycetaceae</taxon>
        <taxon>Saccharomyces</taxon>
    </lineage>
</organism>
<proteinExistence type="evidence at protein level"/>
<comment type="function">
    <text evidence="1 3 5">Catalytic component of the RPD3 histone deacetylase complexes RPD3C(L) and RPD3C(S) responsible for the deacetylation of lysine residues on the N-terminal part of the core histones (H2A, H2B, H3 and H4). Histone deacetylation gives a tag for epigenetic repression and plays an important role in transcriptional regulation, cell cycle progression and developmental events.</text>
</comment>
<comment type="subunit">
    <text evidence="1 3 4">Component of the RPD3C(L) complex composed of at least ASH1, CTI6, DEP1, PHO23, RPD3, RXT2, RXT3, SAP30, SDS3, SIN3, UME1 and UME6. Component of the RPD3C(S) complex composed of at least EAF3, RCO1, RPD3, SIN3, and UME1. Interacts with RPD3.</text>
</comment>
<comment type="subcellular location">
    <subcellularLocation>
        <location>Cytoplasm</location>
    </subcellularLocation>
    <subcellularLocation>
        <location>Nucleus</location>
    </subcellularLocation>
</comment>
<comment type="induction">
    <text evidence="1">By glucose.</text>
</comment>
<comment type="domain">
    <text evidence="1">The NEE-box motif is required for the association to RPD3.</text>
</comment>
<comment type="miscellaneous">
    <text evidence="2">Present with 3040 molecules/cell in log phase SD medium.</text>
</comment>
<sequence>MSTLDIAEDNKIKNEEFKIWKKSIPSLYQHISSLKPIFGSGVDESPSTLRSIVFTNDSSCNKSKGVLSVPLLYSQGSEIFEVDCIVPLGLHYKKPESISEPLVQPDYTMESQKVEQTVLIPKWEFKGETIAKMIYVDNSEINVKVIALSTNGSLAWFREGVKSPVYTMMEPSTSLSSASSGNQNKPCVDFAISNDSKTLTVTKEKHLDNENATIKLIDNSGKIGEVLRTIPVPGIKNIQEIKFLNNQIFATCSDDGIIRFWGNEIGKKPLWILNDSLDGKTTCFAASPFVDTLFMTGTSGGALKVWDIRAVIALGDADAELNINQGHNKVNELFKVHHFYSEQVSKIEFSSISPMEVVTIGGLGNVYHWNFEPVFAIYNEIHEDFQGIISDELEAESMAFYHTEGCRREIGENNKVNTVAYHKYIEDLVATVDSDGLLTVYKPFTGKVLDGSREVGAAKS</sequence>
<accession>Q03010</accession>
<accession>D6W3M9</accession>
<accession>P87330</accession>